<reference key="1">
    <citation type="journal article" date="2014" name="Toxicon">
        <title>Diversity of peptide toxins from stinging ant venoms.</title>
        <authorList>
            <person name="Aili S.R."/>
            <person name="Touchard A."/>
            <person name="Escoubas P."/>
            <person name="Padula M.P."/>
            <person name="Orivel J."/>
            <person name="Dejean A."/>
            <person name="Nicholson G.M."/>
        </authorList>
    </citation>
    <scope>REVIEW</scope>
    <scope>PROTEIN SEQUENCE</scope>
</reference>
<reference key="2">
    <citation type="journal article" date="2016" name="Toxins">
        <title>The biochemical toxin arsenal from ant venoms.</title>
        <authorList>
            <person name="Touchard A."/>
            <person name="Aili S.R."/>
            <person name="Fox E.G."/>
            <person name="Escoubas P."/>
            <person name="Orivel J."/>
            <person name="Nicholson G.M."/>
            <person name="Dejean A."/>
        </authorList>
    </citation>
    <scope>REVIEW</scope>
    <scope>NOMENCLATURE</scope>
</reference>
<sequence>GWRDWLNKGKEWLKKKGPGMVKAALAAATQ</sequence>
<comment type="function">
    <text evidence="1">Shows a broad spectrum of activity against both Gram-positive and Gram-negative bacteria. Also has antimicrobial activity against S.cerevisiae. Has insecticidal and non-hemolytic activity.</text>
</comment>
<comment type="subcellular location">
    <subcellularLocation>
        <location evidence="6">Secreted</location>
    </subcellularLocation>
</comment>
<comment type="tissue specificity">
    <text evidence="6">Expressed by the venom gland.</text>
</comment>
<comment type="similarity">
    <text evidence="5">Belongs to the ponericin-G family.</text>
</comment>
<dbReference type="SMR" id="P0DSI8"/>
<dbReference type="GO" id="GO:0005576">
    <property type="term" value="C:extracellular region"/>
    <property type="evidence" value="ECO:0007669"/>
    <property type="project" value="UniProtKB-SubCell"/>
</dbReference>
<dbReference type="GO" id="GO:0090729">
    <property type="term" value="F:toxin activity"/>
    <property type="evidence" value="ECO:0007669"/>
    <property type="project" value="UniProtKB-KW"/>
</dbReference>
<dbReference type="GO" id="GO:0042742">
    <property type="term" value="P:defense response to bacterium"/>
    <property type="evidence" value="ECO:0007669"/>
    <property type="project" value="UniProtKB-KW"/>
</dbReference>
<dbReference type="GO" id="GO:0050832">
    <property type="term" value="P:defense response to fungus"/>
    <property type="evidence" value="ECO:0007669"/>
    <property type="project" value="UniProtKB-KW"/>
</dbReference>
<dbReference type="GO" id="GO:0031640">
    <property type="term" value="P:killing of cells of another organism"/>
    <property type="evidence" value="ECO:0007669"/>
    <property type="project" value="UniProtKB-KW"/>
</dbReference>
<dbReference type="InterPro" id="IPR010002">
    <property type="entry name" value="Poneritoxin"/>
</dbReference>
<dbReference type="Pfam" id="PF07442">
    <property type="entry name" value="Ponericin"/>
    <property type="match status" value="1"/>
</dbReference>
<evidence type="ECO:0000250" key="1">
    <source>
        <dbReference type="UniProtKB" id="P82416"/>
    </source>
</evidence>
<evidence type="ECO:0000269" key="2">
    <source>
    </source>
</evidence>
<evidence type="ECO:0000303" key="3">
    <source>
    </source>
</evidence>
<evidence type="ECO:0000303" key="4">
    <source>
    </source>
</evidence>
<evidence type="ECO:0000305" key="5"/>
<evidence type="ECO:0000305" key="6">
    <source>
    </source>
</evidence>
<keyword id="KW-0044">Antibiotic</keyword>
<keyword id="KW-0929">Antimicrobial</keyword>
<keyword id="KW-0903">Direct protein sequencing</keyword>
<keyword id="KW-0295">Fungicide</keyword>
<keyword id="KW-0964">Secreted</keyword>
<keyword id="KW-0800">Toxin</keyword>
<proteinExistence type="evidence at protein level"/>
<accession>P0DSI8</accession>
<protein>
    <recommendedName>
        <fullName evidence="4">U1-poneritoxin-Ni3a</fullName>
        <shortName evidence="4">U1-PONTX-Ni3a</shortName>
    </recommendedName>
    <alternativeName>
        <fullName evidence="5">Poneratoxin</fullName>
    </alternativeName>
    <alternativeName>
        <fullName evidence="3">Ponericin Pi I1</fullName>
    </alternativeName>
</protein>
<name>GTX3A_NEOIV</name>
<feature type="peptide" id="PRO_0000447058" description="U1-poneritoxin-Ni3a" evidence="2">
    <location>
        <begin position="1"/>
        <end position="30"/>
    </location>
</feature>
<organism>
    <name type="scientific">Neoponera inversa</name>
    <name type="common">Ant</name>
    <name type="synonym">Ponera inversa</name>
    <dbReference type="NCBI Taxonomy" id="264722"/>
    <lineage>
        <taxon>Eukaryota</taxon>
        <taxon>Metazoa</taxon>
        <taxon>Ecdysozoa</taxon>
        <taxon>Arthropoda</taxon>
        <taxon>Hexapoda</taxon>
        <taxon>Insecta</taxon>
        <taxon>Pterygota</taxon>
        <taxon>Neoptera</taxon>
        <taxon>Endopterygota</taxon>
        <taxon>Hymenoptera</taxon>
        <taxon>Apocrita</taxon>
        <taxon>Aculeata</taxon>
        <taxon>Formicoidea</taxon>
        <taxon>Formicidae</taxon>
        <taxon>Ponerinae</taxon>
        <taxon>Ponerini</taxon>
        <taxon>Neoponera</taxon>
    </lineage>
</organism>